<sequence>MYQKSLLFSLLASSALAAQFPIPDSKGSVTFDEPYEIAAGETYDGGYKTYGRGVSCTGQSEGGQDDTVFIVQEGGTLKNAIIGSDQIEGVYCLGACTIENVWWEAVCEDALSLKGGSGPYNIIGGGAQGADDKVIQHNSGGQVNIDGFTVYDFGKLYRSCGNCDEQYARTVTIKNVVANSGKTLVGINSNLGDTASIDSSTCATDVKKICVEYKGNDTGAEPEEISEGPSDACQYSEPLSSC</sequence>
<name>PLYD_ASPFU</name>
<reference key="1">
    <citation type="journal article" date="2005" name="Nature">
        <title>Genomic sequence of the pathogenic and allergenic filamentous fungus Aspergillus fumigatus.</title>
        <authorList>
            <person name="Nierman W.C."/>
            <person name="Pain A."/>
            <person name="Anderson M.J."/>
            <person name="Wortman J.R."/>
            <person name="Kim H.S."/>
            <person name="Arroyo J."/>
            <person name="Berriman M."/>
            <person name="Abe K."/>
            <person name="Archer D.B."/>
            <person name="Bermejo C."/>
            <person name="Bennett J.W."/>
            <person name="Bowyer P."/>
            <person name="Chen D."/>
            <person name="Collins M."/>
            <person name="Coulsen R."/>
            <person name="Davies R."/>
            <person name="Dyer P.S."/>
            <person name="Farman M.L."/>
            <person name="Fedorova N."/>
            <person name="Fedorova N.D."/>
            <person name="Feldblyum T.V."/>
            <person name="Fischer R."/>
            <person name="Fosker N."/>
            <person name="Fraser A."/>
            <person name="Garcia J.L."/>
            <person name="Garcia M.J."/>
            <person name="Goble A."/>
            <person name="Goldman G.H."/>
            <person name="Gomi K."/>
            <person name="Griffith-Jones S."/>
            <person name="Gwilliam R."/>
            <person name="Haas B.J."/>
            <person name="Haas H."/>
            <person name="Harris D.E."/>
            <person name="Horiuchi H."/>
            <person name="Huang J."/>
            <person name="Humphray S."/>
            <person name="Jimenez J."/>
            <person name="Keller N."/>
            <person name="Khouri H."/>
            <person name="Kitamoto K."/>
            <person name="Kobayashi T."/>
            <person name="Konzack S."/>
            <person name="Kulkarni R."/>
            <person name="Kumagai T."/>
            <person name="Lafton A."/>
            <person name="Latge J.-P."/>
            <person name="Li W."/>
            <person name="Lord A."/>
            <person name="Lu C."/>
            <person name="Majoros W.H."/>
            <person name="May G.S."/>
            <person name="Miller B.L."/>
            <person name="Mohamoud Y."/>
            <person name="Molina M."/>
            <person name="Monod M."/>
            <person name="Mouyna I."/>
            <person name="Mulligan S."/>
            <person name="Murphy L.D."/>
            <person name="O'Neil S."/>
            <person name="Paulsen I."/>
            <person name="Penalva M.A."/>
            <person name="Pertea M."/>
            <person name="Price C."/>
            <person name="Pritchard B.L."/>
            <person name="Quail M.A."/>
            <person name="Rabbinowitsch E."/>
            <person name="Rawlins N."/>
            <person name="Rajandream M.A."/>
            <person name="Reichard U."/>
            <person name="Renauld H."/>
            <person name="Robson G.D."/>
            <person name="Rodriguez de Cordoba S."/>
            <person name="Rodriguez-Pena J.M."/>
            <person name="Ronning C.M."/>
            <person name="Rutter S."/>
            <person name="Salzberg S.L."/>
            <person name="Sanchez M."/>
            <person name="Sanchez-Ferrero J.C."/>
            <person name="Saunders D."/>
            <person name="Seeger K."/>
            <person name="Squares R."/>
            <person name="Squares S."/>
            <person name="Takeuchi M."/>
            <person name="Tekaia F."/>
            <person name="Turner G."/>
            <person name="Vazquez de Aldana C.R."/>
            <person name="Weidman J."/>
            <person name="White O."/>
            <person name="Woodward J.R."/>
            <person name="Yu J.-H."/>
            <person name="Fraser C.M."/>
            <person name="Galagan J.E."/>
            <person name="Asai K."/>
            <person name="Machida M."/>
            <person name="Hall N."/>
            <person name="Barrell B.G."/>
            <person name="Denning D.W."/>
        </authorList>
    </citation>
    <scope>NUCLEOTIDE SEQUENCE [LARGE SCALE GENOMIC DNA]</scope>
    <source>
        <strain>ATCC MYA-4609 / CBS 101355 / FGSC A1100 / Af293</strain>
    </source>
</reference>
<proteinExistence type="inferred from homology"/>
<keyword id="KW-0106">Calcium</keyword>
<keyword id="KW-0119">Carbohydrate metabolism</keyword>
<keyword id="KW-0961">Cell wall biogenesis/degradation</keyword>
<keyword id="KW-0325">Glycoprotein</keyword>
<keyword id="KW-0456">Lyase</keyword>
<keyword id="KW-0624">Polysaccharide degradation</keyword>
<keyword id="KW-1185">Reference proteome</keyword>
<keyword id="KW-0964">Secreted</keyword>
<keyword id="KW-0732">Signal</keyword>
<gene>
    <name type="primary">plyD</name>
    <name type="ORF">AFUA_7G06400</name>
</gene>
<protein>
    <recommendedName>
        <fullName>Probable pectate lyase D</fullName>
        <ecNumber>4.2.2.2</ecNumber>
    </recommendedName>
</protein>
<evidence type="ECO:0000250" key="1"/>
<evidence type="ECO:0000255" key="2"/>
<evidence type="ECO:0000256" key="3">
    <source>
        <dbReference type="SAM" id="MobiDB-lite"/>
    </source>
</evidence>
<evidence type="ECO:0000305" key="4"/>
<dbReference type="EC" id="4.2.2.2"/>
<dbReference type="EMBL" id="AAHF01000009">
    <property type="protein sequence ID" value="EAL86832.1"/>
    <property type="molecule type" value="Genomic_DNA"/>
</dbReference>
<dbReference type="RefSeq" id="XP_748870.1">
    <property type="nucleotide sequence ID" value="XM_743777.1"/>
</dbReference>
<dbReference type="SMR" id="Q4WGV9"/>
<dbReference type="STRING" id="330879.Q4WGV9"/>
<dbReference type="GlyCosmos" id="Q4WGV9">
    <property type="glycosylation" value="1 site, No reported glycans"/>
</dbReference>
<dbReference type="EnsemblFungi" id="EAL86832">
    <property type="protein sequence ID" value="EAL86832"/>
    <property type="gene ID" value="AFUA_7G06400"/>
</dbReference>
<dbReference type="GeneID" id="3506364"/>
<dbReference type="KEGG" id="afm:AFUA_7G06400"/>
<dbReference type="VEuPathDB" id="FungiDB:Afu7g06400"/>
<dbReference type="eggNOG" id="ENOG502RYK9">
    <property type="taxonomic scope" value="Eukaryota"/>
</dbReference>
<dbReference type="HOGENOM" id="CLU_044863_3_0_1"/>
<dbReference type="InParanoid" id="Q4WGV9"/>
<dbReference type="OMA" id="FYTMMKR"/>
<dbReference type="OrthoDB" id="441042at2759"/>
<dbReference type="Proteomes" id="UP000002530">
    <property type="component" value="Chromosome 7"/>
</dbReference>
<dbReference type="GO" id="GO:0005576">
    <property type="term" value="C:extracellular region"/>
    <property type="evidence" value="ECO:0007669"/>
    <property type="project" value="UniProtKB-SubCell"/>
</dbReference>
<dbReference type="GO" id="GO:0030570">
    <property type="term" value="F:pectate lyase activity"/>
    <property type="evidence" value="ECO:0007669"/>
    <property type="project" value="UniProtKB-EC"/>
</dbReference>
<dbReference type="GO" id="GO:0071555">
    <property type="term" value="P:cell wall organization"/>
    <property type="evidence" value="ECO:0007669"/>
    <property type="project" value="UniProtKB-KW"/>
</dbReference>
<dbReference type="GO" id="GO:0045490">
    <property type="term" value="P:pectin catabolic process"/>
    <property type="evidence" value="ECO:0000318"/>
    <property type="project" value="GO_Central"/>
</dbReference>
<dbReference type="Gene3D" id="2.160.20.10">
    <property type="entry name" value="Single-stranded right-handed beta-helix, Pectin lyase-like"/>
    <property type="match status" value="1"/>
</dbReference>
<dbReference type="InterPro" id="IPR004898">
    <property type="entry name" value="Pectate_lyase_PlyH/PlyE-like"/>
</dbReference>
<dbReference type="InterPro" id="IPR012334">
    <property type="entry name" value="Pectin_lyas_fold"/>
</dbReference>
<dbReference type="InterPro" id="IPR011050">
    <property type="entry name" value="Pectin_lyase_fold/virulence"/>
</dbReference>
<dbReference type="PANTHER" id="PTHR33407">
    <property type="entry name" value="PECTATE LYASE F-RELATED"/>
    <property type="match status" value="1"/>
</dbReference>
<dbReference type="PANTHER" id="PTHR33407:SF11">
    <property type="entry name" value="PECTATE LYASE H-RELATED"/>
    <property type="match status" value="1"/>
</dbReference>
<dbReference type="Pfam" id="PF03211">
    <property type="entry name" value="Pectate_lyase"/>
    <property type="match status" value="1"/>
</dbReference>
<dbReference type="SUPFAM" id="SSF51126">
    <property type="entry name" value="Pectin lyase-like"/>
    <property type="match status" value="1"/>
</dbReference>
<comment type="function">
    <text evidence="1">Pectinolytic enzyme consist of four classes of enzymes: pectin lyase, polygalacturonase, pectin methylesterase and rhamnogalacturonase. Among pectinolytic enzymes, pectin lyase is the most important in depolymerization of pectin, since it cleaves internal glycosidic bonds of highly methylated pectins. Favors pectate, the anion, over pectin, the methyl ester (By similarity).</text>
</comment>
<comment type="catalytic activity">
    <reaction>
        <text>Eliminative cleavage of (1-&gt;4)-alpha-D-galacturonan to give oligosaccharides with 4-deoxy-alpha-D-galact-4-enuronosyl groups at their non-reducing ends.</text>
        <dbReference type="EC" id="4.2.2.2"/>
    </reaction>
</comment>
<comment type="cofactor">
    <cofactor evidence="1">
        <name>Ca(2+)</name>
        <dbReference type="ChEBI" id="CHEBI:29108"/>
    </cofactor>
    <text evidence="1">Binds 1 Ca(2+) ion per subunit.</text>
</comment>
<comment type="subcellular location">
    <subcellularLocation>
        <location evidence="1">Secreted</location>
    </subcellularLocation>
</comment>
<comment type="similarity">
    <text evidence="4">Belongs to the polysaccharide lyase 3 family.</text>
</comment>
<organism>
    <name type="scientific">Aspergillus fumigatus (strain ATCC MYA-4609 / CBS 101355 / FGSC A1100 / Af293)</name>
    <name type="common">Neosartorya fumigata</name>
    <dbReference type="NCBI Taxonomy" id="330879"/>
    <lineage>
        <taxon>Eukaryota</taxon>
        <taxon>Fungi</taxon>
        <taxon>Dikarya</taxon>
        <taxon>Ascomycota</taxon>
        <taxon>Pezizomycotina</taxon>
        <taxon>Eurotiomycetes</taxon>
        <taxon>Eurotiomycetidae</taxon>
        <taxon>Eurotiales</taxon>
        <taxon>Aspergillaceae</taxon>
        <taxon>Aspergillus</taxon>
        <taxon>Aspergillus subgen. Fumigati</taxon>
    </lineage>
</organism>
<feature type="signal peptide" evidence="2">
    <location>
        <begin position="1"/>
        <end position="17"/>
    </location>
</feature>
<feature type="chain" id="PRO_0000394576" description="Probable pectate lyase D">
    <location>
        <begin position="18"/>
        <end position="242"/>
    </location>
</feature>
<feature type="region of interest" description="Disordered" evidence="3">
    <location>
        <begin position="217"/>
        <end position="242"/>
    </location>
</feature>
<feature type="glycosylation site" description="N-linked (GlcNAc...) asparagine" evidence="2">
    <location>
        <position position="216"/>
    </location>
</feature>
<accession>Q4WGV9</accession>